<organism>
    <name type="scientific">Listeria monocytogenes serotype 4a (strain HCC23)</name>
    <dbReference type="NCBI Taxonomy" id="552536"/>
    <lineage>
        <taxon>Bacteria</taxon>
        <taxon>Bacillati</taxon>
        <taxon>Bacillota</taxon>
        <taxon>Bacilli</taxon>
        <taxon>Bacillales</taxon>
        <taxon>Listeriaceae</taxon>
        <taxon>Listeria</taxon>
    </lineage>
</organism>
<sequence length="488" mass="54128">MNLEETMPLVFERSIPGRIGFSLPESDVPETNAGDYFDQAYIRSVPADLPELSELEIMRHYTNLSNHNFGVDSGFYPLGSCTMKYNPKINEKVARFPGFANIHPNQPESSVQGALELLYDLQTSLVEITGMDEVTLQPAAGAHGEWTGLMLIRAFHEKNGDTKRTKVIIPDSAHGTNPASAAVAGFDVVTVKSNEKGLVDVADLKKVVGEDTAALMLTNPNTLGLFEKDIVEMAEIVHEAGGKLYYDGANLNAIMAKVRPGDMGFDVVHLNLHKTFTGPHGGGGPGSGPIGVKKELIPFLPTPVLTKKDEGYTFDYNYPDSIGRVKPYYGNFGINVRAYTYIRTMGPDGLKLVTEYAVLNANYMMRKLQEAYDLPFDQVCKHEFVLSGNRQKKLGVRTVDIAKRLLDHNFHPPTVYFPLIVGEAIMIEPTETESKETLDSFIDTMLKIAKEAEENPEIVQEAPHSTYVKRLDETRAARKPILRYQKEV</sequence>
<evidence type="ECO:0000255" key="1">
    <source>
        <dbReference type="HAMAP-Rule" id="MF_00713"/>
    </source>
</evidence>
<feature type="chain" id="PRO_1000148000" description="Probable glycine dehydrogenase (decarboxylating) subunit 2">
    <location>
        <begin position="1"/>
        <end position="488"/>
    </location>
</feature>
<feature type="modified residue" description="N6-(pyridoxal phosphate)lysine" evidence="1">
    <location>
        <position position="274"/>
    </location>
</feature>
<comment type="function">
    <text evidence="1">The glycine cleavage system catalyzes the degradation of glycine. The P protein binds the alpha-amino group of glycine through its pyridoxal phosphate cofactor; CO(2) is released and the remaining methylamine moiety is then transferred to the lipoamide cofactor of the H protein.</text>
</comment>
<comment type="catalytic activity">
    <reaction evidence="1">
        <text>N(6)-[(R)-lipoyl]-L-lysyl-[glycine-cleavage complex H protein] + glycine + H(+) = N(6)-[(R)-S(8)-aminomethyldihydrolipoyl]-L-lysyl-[glycine-cleavage complex H protein] + CO2</text>
        <dbReference type="Rhea" id="RHEA:24304"/>
        <dbReference type="Rhea" id="RHEA-COMP:10494"/>
        <dbReference type="Rhea" id="RHEA-COMP:10495"/>
        <dbReference type="ChEBI" id="CHEBI:15378"/>
        <dbReference type="ChEBI" id="CHEBI:16526"/>
        <dbReference type="ChEBI" id="CHEBI:57305"/>
        <dbReference type="ChEBI" id="CHEBI:83099"/>
        <dbReference type="ChEBI" id="CHEBI:83143"/>
        <dbReference type="EC" id="1.4.4.2"/>
    </reaction>
</comment>
<comment type="cofactor">
    <cofactor evidence="1">
        <name>pyridoxal 5'-phosphate</name>
        <dbReference type="ChEBI" id="CHEBI:597326"/>
    </cofactor>
</comment>
<comment type="subunit">
    <text evidence="1">The glycine cleavage system is composed of four proteins: P, T, L and H. In this organism, the P 'protein' is a heterodimer of two subunits.</text>
</comment>
<comment type="similarity">
    <text evidence="1">Belongs to the GcvP family. C-terminal subunit subfamily.</text>
</comment>
<dbReference type="EC" id="1.4.4.2" evidence="1"/>
<dbReference type="EMBL" id="CP001175">
    <property type="protein sequence ID" value="ACK39568.1"/>
    <property type="molecule type" value="Genomic_DNA"/>
</dbReference>
<dbReference type="RefSeq" id="WP_012581369.1">
    <property type="nucleotide sequence ID" value="NC_011660.1"/>
</dbReference>
<dbReference type="SMR" id="B8DFX8"/>
<dbReference type="KEGG" id="lmh:LMHCC_1221"/>
<dbReference type="HOGENOM" id="CLU_004620_5_0_9"/>
<dbReference type="GO" id="GO:0005829">
    <property type="term" value="C:cytosol"/>
    <property type="evidence" value="ECO:0007669"/>
    <property type="project" value="TreeGrafter"/>
</dbReference>
<dbReference type="GO" id="GO:0005960">
    <property type="term" value="C:glycine cleavage complex"/>
    <property type="evidence" value="ECO:0007669"/>
    <property type="project" value="TreeGrafter"/>
</dbReference>
<dbReference type="GO" id="GO:0016594">
    <property type="term" value="F:glycine binding"/>
    <property type="evidence" value="ECO:0007669"/>
    <property type="project" value="TreeGrafter"/>
</dbReference>
<dbReference type="GO" id="GO:0004375">
    <property type="term" value="F:glycine dehydrogenase (decarboxylating) activity"/>
    <property type="evidence" value="ECO:0007669"/>
    <property type="project" value="UniProtKB-EC"/>
</dbReference>
<dbReference type="GO" id="GO:0030170">
    <property type="term" value="F:pyridoxal phosphate binding"/>
    <property type="evidence" value="ECO:0007669"/>
    <property type="project" value="TreeGrafter"/>
</dbReference>
<dbReference type="GO" id="GO:0019464">
    <property type="term" value="P:glycine decarboxylation via glycine cleavage system"/>
    <property type="evidence" value="ECO:0007669"/>
    <property type="project" value="UniProtKB-UniRule"/>
</dbReference>
<dbReference type="CDD" id="cd00613">
    <property type="entry name" value="GDC-P"/>
    <property type="match status" value="1"/>
</dbReference>
<dbReference type="FunFam" id="3.40.640.10:FF:000034">
    <property type="entry name" value="Probable glycine dehydrogenase (decarboxylating) subunit 2"/>
    <property type="match status" value="1"/>
</dbReference>
<dbReference type="FunFam" id="3.90.1150.10:FF:000014">
    <property type="entry name" value="Probable glycine dehydrogenase (decarboxylating) subunit 2"/>
    <property type="match status" value="1"/>
</dbReference>
<dbReference type="Gene3D" id="6.20.440.10">
    <property type="match status" value="1"/>
</dbReference>
<dbReference type="Gene3D" id="3.90.1150.10">
    <property type="entry name" value="Aspartate Aminotransferase, domain 1"/>
    <property type="match status" value="1"/>
</dbReference>
<dbReference type="Gene3D" id="3.40.640.10">
    <property type="entry name" value="Type I PLP-dependent aspartate aminotransferase-like (Major domain)"/>
    <property type="match status" value="1"/>
</dbReference>
<dbReference type="HAMAP" id="MF_00713">
    <property type="entry name" value="GcvPB"/>
    <property type="match status" value="1"/>
</dbReference>
<dbReference type="InterPro" id="IPR023012">
    <property type="entry name" value="GcvPB"/>
</dbReference>
<dbReference type="InterPro" id="IPR049316">
    <property type="entry name" value="GDC-P_C"/>
</dbReference>
<dbReference type="InterPro" id="IPR049315">
    <property type="entry name" value="GDC-P_N"/>
</dbReference>
<dbReference type="InterPro" id="IPR020581">
    <property type="entry name" value="GDC_P"/>
</dbReference>
<dbReference type="InterPro" id="IPR015424">
    <property type="entry name" value="PyrdxlP-dep_Trfase"/>
</dbReference>
<dbReference type="InterPro" id="IPR015421">
    <property type="entry name" value="PyrdxlP-dep_Trfase_major"/>
</dbReference>
<dbReference type="InterPro" id="IPR015422">
    <property type="entry name" value="PyrdxlP-dep_Trfase_small"/>
</dbReference>
<dbReference type="NCBIfam" id="NF003346">
    <property type="entry name" value="PRK04366.1"/>
    <property type="match status" value="1"/>
</dbReference>
<dbReference type="PANTHER" id="PTHR11773:SF1">
    <property type="entry name" value="GLYCINE DEHYDROGENASE (DECARBOXYLATING), MITOCHONDRIAL"/>
    <property type="match status" value="1"/>
</dbReference>
<dbReference type="PANTHER" id="PTHR11773">
    <property type="entry name" value="GLYCINE DEHYDROGENASE, DECARBOXYLATING"/>
    <property type="match status" value="1"/>
</dbReference>
<dbReference type="Pfam" id="PF21478">
    <property type="entry name" value="GcvP2_C"/>
    <property type="match status" value="1"/>
</dbReference>
<dbReference type="Pfam" id="PF02347">
    <property type="entry name" value="GDC-P"/>
    <property type="match status" value="1"/>
</dbReference>
<dbReference type="SUPFAM" id="SSF53383">
    <property type="entry name" value="PLP-dependent transferases"/>
    <property type="match status" value="1"/>
</dbReference>
<protein>
    <recommendedName>
        <fullName evidence="1">Probable glycine dehydrogenase (decarboxylating) subunit 2</fullName>
        <ecNumber evidence="1">1.4.4.2</ecNumber>
    </recommendedName>
    <alternativeName>
        <fullName evidence="1">Glycine cleavage system P-protein subunit 2</fullName>
    </alternativeName>
    <alternativeName>
        <fullName evidence="1">Glycine decarboxylase subunit 2</fullName>
    </alternativeName>
    <alternativeName>
        <fullName evidence="1">Glycine dehydrogenase (aminomethyl-transferring) subunit 2</fullName>
    </alternativeName>
</protein>
<gene>
    <name evidence="1" type="primary">gcvPB</name>
    <name type="ordered locus">LMHCC_1221</name>
</gene>
<proteinExistence type="inferred from homology"/>
<accession>B8DFX8</accession>
<reference key="1">
    <citation type="journal article" date="2011" name="J. Bacteriol.">
        <title>Genome sequence of lineage III Listeria monocytogenes strain HCC23.</title>
        <authorList>
            <person name="Steele C.L."/>
            <person name="Donaldson J.R."/>
            <person name="Paul D."/>
            <person name="Banes M.M."/>
            <person name="Arick T."/>
            <person name="Bridges S.M."/>
            <person name="Lawrence M.L."/>
        </authorList>
    </citation>
    <scope>NUCLEOTIDE SEQUENCE [LARGE SCALE GENOMIC DNA]</scope>
    <source>
        <strain>HCC23</strain>
    </source>
</reference>
<keyword id="KW-0560">Oxidoreductase</keyword>
<keyword id="KW-0663">Pyridoxal phosphate</keyword>
<name>GCSPB_LISMH</name>